<comment type="function">
    <text evidence="1 2">Plays a role in rod outer segment (ROS) morphogenesis (By similarity). May play a role with PRPH2 in the maintenance of the structure of ROS curved disks (By similarity). Plays a role in the organization of the ROS and maintenance of ROS disk diameter (By similarity). Involved in the maintenance of the retina outer nuclear layer (By similarity).</text>
</comment>
<comment type="subunit">
    <text evidence="1 2">Homodimer; disulfide-linked (By similarity). Forms a homotetramer (By similarity). Forms a heterotetramer with PRPH2 (By similarity). Homotetramer and heterotetramer core complexes go on to form higher order complexes by formation of intermolecular disulfide bonds (By similarity). Interacts with STX3 (By similarity). Interacts with SNAP25 (By similarity).</text>
</comment>
<comment type="subcellular location">
    <subcellularLocation>
        <location evidence="1">Photoreceptor inner segment membrane</location>
        <topology evidence="3">Multi-pass membrane protein</topology>
    </subcellularLocation>
    <subcellularLocation>
        <location evidence="1">Photoreceptor outer segment membrane</location>
        <topology evidence="3">Multi-pass membrane protein</topology>
    </subcellularLocation>
</comment>
<comment type="similarity">
    <text evidence="5">Belongs to the PRPH2/ROM1 family.</text>
</comment>
<evidence type="ECO:0000250" key="1">
    <source>
        <dbReference type="UniProtKB" id="P32958"/>
    </source>
</evidence>
<evidence type="ECO:0000250" key="2">
    <source>
        <dbReference type="UniProtKB" id="P52205"/>
    </source>
</evidence>
<evidence type="ECO:0000255" key="3"/>
<evidence type="ECO:0000256" key="4">
    <source>
        <dbReference type="SAM" id="MobiDB-lite"/>
    </source>
</evidence>
<evidence type="ECO:0000305" key="5"/>
<gene>
    <name type="primary">Rom1</name>
</gene>
<feature type="chain" id="PRO_0000168113" description="Rod outer segment membrane protein 1">
    <location>
        <begin position="1"/>
        <end position="351"/>
    </location>
</feature>
<feature type="topological domain" description="Cytoplasmic" evidence="3">
    <location>
        <begin position="1"/>
        <end position="19"/>
    </location>
</feature>
<feature type="transmembrane region" description="Helical" evidence="3">
    <location>
        <begin position="20"/>
        <end position="44"/>
    </location>
</feature>
<feature type="topological domain" description="Lumenal" evidence="3">
    <location>
        <begin position="45"/>
        <end position="64"/>
    </location>
</feature>
<feature type="transmembrane region" description="Helical" evidence="3">
    <location>
        <begin position="65"/>
        <end position="84"/>
    </location>
</feature>
<feature type="topological domain" description="Cytoplasmic" evidence="3">
    <location>
        <begin position="85"/>
        <end position="102"/>
    </location>
</feature>
<feature type="transmembrane region" description="Helical" evidence="3">
    <location>
        <begin position="103"/>
        <end position="125"/>
    </location>
</feature>
<feature type="topological domain" description="Lumenal" evidence="3">
    <location>
        <begin position="126"/>
        <end position="263"/>
    </location>
</feature>
<feature type="transmembrane region" description="Helical" evidence="3">
    <location>
        <begin position="264"/>
        <end position="286"/>
    </location>
</feature>
<feature type="topological domain" description="Cytoplasmic" evidence="3">
    <location>
        <begin position="287"/>
        <end position="351"/>
    </location>
</feature>
<feature type="region of interest" description="Disordered" evidence="4">
    <location>
        <begin position="329"/>
        <end position="351"/>
    </location>
</feature>
<feature type="compositionally biased region" description="Basic and acidic residues" evidence="4">
    <location>
        <begin position="342"/>
        <end position="351"/>
    </location>
</feature>
<proteinExistence type="evidence at transcript level"/>
<reference key="1">
    <citation type="submission" date="2003-01" db="EMBL/GenBank/DDBJ databases">
        <title>Defining changes in retinal gene expression after prolonged exposure to light and light induced oxidative stress.</title>
        <authorList>
            <person name="Kelln R.M."/>
            <person name="Patterson M.L."/>
            <person name="Darrow R.M."/>
            <person name="Barsalou L."/>
            <person name="Organisciak D.T."/>
            <person name="Wong P."/>
        </authorList>
    </citation>
    <scope>NUCLEOTIDE SEQUENCE [MRNA]</scope>
    <source>
        <strain>Sprague-Dawley</strain>
        <tissue>Retina</tissue>
    </source>
</reference>
<reference key="2">
    <citation type="journal article" date="2004" name="Genome Res.">
        <title>The status, quality, and expansion of the NIH full-length cDNA project: the Mammalian Gene Collection (MGC).</title>
        <authorList>
            <consortium name="The MGC Project Team"/>
        </authorList>
    </citation>
    <scope>NUCLEOTIDE SEQUENCE [LARGE SCALE MRNA]</scope>
    <source>
        <tissue>Brain</tissue>
    </source>
</reference>
<accession>Q5PPM7</accession>
<protein>
    <recommendedName>
        <fullName>Rod outer segment membrane protein 1</fullName>
        <shortName>ROSP1</shortName>
    </recommendedName>
</protein>
<sequence>MAPVLPVVLPLQPRIRLAQGTWLLSWLLALAGGLTLLCSGHLLVQLWHLGTFLAPSCSFPALPQTALAAGAVALGTGLGGAGASRASLDAAQYPPWRGVLTPLLVVGTAAGGGLLTLGLGLALALPVSLHQGLEEGLQAALAHYKDTEVPGHCQAKRLMDELQLRYHCCGRHGYKDWFGVQWVSSRYLDPNDQDVVDRIQSNVEGLYLIDGVPFSCCNPHSPRPCLQSQLSDPYAHPLFDPRQPNLNLWAQGCHEVLVGHLQGLSGTLGSILAVTLLLQVLVLLGLRYLQTALEGLGGVIDGEGETQGYLLPGGLKDILQTAWLQGGLAHKPAPEEAPPDEEPPKEVLAEA</sequence>
<organism>
    <name type="scientific">Rattus norvegicus</name>
    <name type="common">Rat</name>
    <dbReference type="NCBI Taxonomy" id="10116"/>
    <lineage>
        <taxon>Eukaryota</taxon>
        <taxon>Metazoa</taxon>
        <taxon>Chordata</taxon>
        <taxon>Craniata</taxon>
        <taxon>Vertebrata</taxon>
        <taxon>Euteleostomi</taxon>
        <taxon>Mammalia</taxon>
        <taxon>Eutheria</taxon>
        <taxon>Euarchontoglires</taxon>
        <taxon>Glires</taxon>
        <taxon>Rodentia</taxon>
        <taxon>Myomorpha</taxon>
        <taxon>Muroidea</taxon>
        <taxon>Muridae</taxon>
        <taxon>Murinae</taxon>
        <taxon>Rattus</taxon>
    </lineage>
</organism>
<dbReference type="EMBL" id="AY212508">
    <property type="protein sequence ID" value="AAO46095.1"/>
    <property type="molecule type" value="mRNA"/>
</dbReference>
<dbReference type="EMBL" id="BC087605">
    <property type="protein sequence ID" value="AAH87605.1"/>
    <property type="molecule type" value="mRNA"/>
</dbReference>
<dbReference type="RefSeq" id="NP_001009690.1">
    <property type="nucleotide sequence ID" value="NM_001009690.1"/>
</dbReference>
<dbReference type="SMR" id="Q5PPM7"/>
<dbReference type="FunCoup" id="Q5PPM7">
    <property type="interactions" value="7"/>
</dbReference>
<dbReference type="STRING" id="10116.ENSRNOP00000026897"/>
<dbReference type="PhosphoSitePlus" id="Q5PPM7"/>
<dbReference type="PaxDb" id="10116-ENSRNOP00000026897"/>
<dbReference type="Ensembl" id="ENSRNOT00000026897.7">
    <property type="protein sequence ID" value="ENSRNOP00000026897.4"/>
    <property type="gene ID" value="ENSRNOG00000019858.7"/>
</dbReference>
<dbReference type="GeneID" id="309201"/>
<dbReference type="KEGG" id="rno:309201"/>
<dbReference type="UCSC" id="RGD:1306070">
    <property type="organism name" value="rat"/>
</dbReference>
<dbReference type="AGR" id="RGD:1306070"/>
<dbReference type="CTD" id="6094"/>
<dbReference type="RGD" id="1306070">
    <property type="gene designation" value="Rom1"/>
</dbReference>
<dbReference type="eggNOG" id="KOG3882">
    <property type="taxonomic scope" value="Eukaryota"/>
</dbReference>
<dbReference type="GeneTree" id="ENSGT00940000159921"/>
<dbReference type="HOGENOM" id="CLU_068903_0_0_1"/>
<dbReference type="InParanoid" id="Q5PPM7"/>
<dbReference type="OMA" id="AARYPPW"/>
<dbReference type="OrthoDB" id="9836210at2759"/>
<dbReference type="PhylomeDB" id="Q5PPM7"/>
<dbReference type="TreeFam" id="TF331684"/>
<dbReference type="PRO" id="PR:Q5PPM7"/>
<dbReference type="Proteomes" id="UP000002494">
    <property type="component" value="Chromosome 1"/>
</dbReference>
<dbReference type="Bgee" id="ENSRNOG00000019858">
    <property type="expression patterns" value="Expressed in pancreas and 19 other cell types or tissues"/>
</dbReference>
<dbReference type="GO" id="GO:0001750">
    <property type="term" value="C:photoreceptor outer segment"/>
    <property type="evidence" value="ECO:0000266"/>
    <property type="project" value="RGD"/>
</dbReference>
<dbReference type="GO" id="GO:0042622">
    <property type="term" value="C:photoreceptor outer segment membrane"/>
    <property type="evidence" value="ECO:0000266"/>
    <property type="project" value="RGD"/>
</dbReference>
<dbReference type="GO" id="GO:0005886">
    <property type="term" value="C:plasma membrane"/>
    <property type="evidence" value="ECO:0000318"/>
    <property type="project" value="GO_Central"/>
</dbReference>
<dbReference type="GO" id="GO:0042803">
    <property type="term" value="F:protein homodimerization activity"/>
    <property type="evidence" value="ECO:0000266"/>
    <property type="project" value="RGD"/>
</dbReference>
<dbReference type="GO" id="GO:0060219">
    <property type="term" value="P:camera-type eye photoreceptor cell differentiation"/>
    <property type="evidence" value="ECO:0000266"/>
    <property type="project" value="RGD"/>
</dbReference>
<dbReference type="GO" id="GO:0007155">
    <property type="term" value="P:cell adhesion"/>
    <property type="evidence" value="ECO:0007669"/>
    <property type="project" value="UniProtKB-KW"/>
</dbReference>
<dbReference type="GO" id="GO:0050908">
    <property type="term" value="P:detection of light stimulus involved in visual perception"/>
    <property type="evidence" value="ECO:0000266"/>
    <property type="project" value="RGD"/>
</dbReference>
<dbReference type="GO" id="GO:0035845">
    <property type="term" value="P:photoreceptor cell outer segment organization"/>
    <property type="evidence" value="ECO:0000266"/>
    <property type="project" value="RGD"/>
</dbReference>
<dbReference type="GO" id="GO:0051291">
    <property type="term" value="P:protein heterooligomerization"/>
    <property type="evidence" value="ECO:0000266"/>
    <property type="project" value="RGD"/>
</dbReference>
<dbReference type="GO" id="GO:0051260">
    <property type="term" value="P:protein homooligomerization"/>
    <property type="evidence" value="ECO:0000266"/>
    <property type="project" value="RGD"/>
</dbReference>
<dbReference type="GO" id="GO:1903546">
    <property type="term" value="P:protein localization to photoreceptor outer segment"/>
    <property type="evidence" value="ECO:0000266"/>
    <property type="project" value="RGD"/>
</dbReference>
<dbReference type="GO" id="GO:0010468">
    <property type="term" value="P:regulation of gene expression"/>
    <property type="evidence" value="ECO:0000266"/>
    <property type="project" value="RGD"/>
</dbReference>
<dbReference type="GO" id="GO:0060041">
    <property type="term" value="P:retina development in camera-type eye"/>
    <property type="evidence" value="ECO:0000266"/>
    <property type="project" value="RGD"/>
</dbReference>
<dbReference type="GO" id="GO:0060042">
    <property type="term" value="P:retina morphogenesis in camera-type eye"/>
    <property type="evidence" value="ECO:0000266"/>
    <property type="project" value="RGD"/>
</dbReference>
<dbReference type="GO" id="GO:0061298">
    <property type="term" value="P:retina vasculature development in camera-type eye"/>
    <property type="evidence" value="ECO:0000266"/>
    <property type="project" value="RGD"/>
</dbReference>
<dbReference type="CDD" id="cd03162">
    <property type="entry name" value="peripherin_like_LEL"/>
    <property type="match status" value="1"/>
</dbReference>
<dbReference type="FunFam" id="1.10.1450.10:FF:000002">
    <property type="entry name" value="Retinal outer segment membrane protein 1"/>
    <property type="match status" value="1"/>
</dbReference>
<dbReference type="Gene3D" id="1.10.1450.10">
    <property type="entry name" value="Tetraspanin"/>
    <property type="match status" value="1"/>
</dbReference>
<dbReference type="InterPro" id="IPR000830">
    <property type="entry name" value="Peripherin/rom-1"/>
</dbReference>
<dbReference type="InterPro" id="IPR018498">
    <property type="entry name" value="Peripherin/rom-1_CS"/>
</dbReference>
<dbReference type="InterPro" id="IPR042026">
    <property type="entry name" value="Peripherin_LEL"/>
</dbReference>
<dbReference type="InterPro" id="IPR018499">
    <property type="entry name" value="Tetraspanin/Peripherin"/>
</dbReference>
<dbReference type="InterPro" id="IPR008952">
    <property type="entry name" value="Tetraspanin_EC2_sf"/>
</dbReference>
<dbReference type="Pfam" id="PF00335">
    <property type="entry name" value="Tetraspanin"/>
    <property type="match status" value="1"/>
</dbReference>
<dbReference type="PRINTS" id="PR00218">
    <property type="entry name" value="PERIPHERNRDS"/>
</dbReference>
<dbReference type="SUPFAM" id="SSF48652">
    <property type="entry name" value="Tetraspanin"/>
    <property type="match status" value="1"/>
</dbReference>
<dbReference type="PROSITE" id="PS00930">
    <property type="entry name" value="RDS_ROM1"/>
    <property type="match status" value="1"/>
</dbReference>
<name>ROM1_RAT</name>
<keyword id="KW-0130">Cell adhesion</keyword>
<keyword id="KW-0966">Cell projection</keyword>
<keyword id="KW-1015">Disulfide bond</keyword>
<keyword id="KW-0472">Membrane</keyword>
<keyword id="KW-1185">Reference proteome</keyword>
<keyword id="KW-0716">Sensory transduction</keyword>
<keyword id="KW-0812">Transmembrane</keyword>
<keyword id="KW-1133">Transmembrane helix</keyword>
<keyword id="KW-0844">Vision</keyword>